<proteinExistence type="inferred from homology"/>
<organism>
    <name type="scientific">Aquifex aeolicus (strain VF5)</name>
    <dbReference type="NCBI Taxonomy" id="224324"/>
    <lineage>
        <taxon>Bacteria</taxon>
        <taxon>Pseudomonadati</taxon>
        <taxon>Aquificota</taxon>
        <taxon>Aquificia</taxon>
        <taxon>Aquificales</taxon>
        <taxon>Aquificaceae</taxon>
        <taxon>Aquifex</taxon>
    </lineage>
</organism>
<name>Y711_AQUAE</name>
<evidence type="ECO:0000255" key="1"/>
<accession>O66927</accession>
<gene>
    <name type="ordered locus">aq_711</name>
</gene>
<dbReference type="EMBL" id="AE000657">
    <property type="protein sequence ID" value="AAC06889.1"/>
    <property type="molecule type" value="Genomic_DNA"/>
</dbReference>
<dbReference type="PIR" id="C70362">
    <property type="entry name" value="C70362"/>
</dbReference>
<dbReference type="RefSeq" id="NP_213487.1">
    <property type="nucleotide sequence ID" value="NC_000918.1"/>
</dbReference>
<dbReference type="RefSeq" id="WP_010880425.1">
    <property type="nucleotide sequence ID" value="NC_000918.1"/>
</dbReference>
<dbReference type="SMR" id="O66927"/>
<dbReference type="STRING" id="224324.aq_711"/>
<dbReference type="EnsemblBacteria" id="AAC06889">
    <property type="protein sequence ID" value="AAC06889"/>
    <property type="gene ID" value="aq_711"/>
</dbReference>
<dbReference type="KEGG" id="aae:aq_711"/>
<dbReference type="eggNOG" id="COG2976">
    <property type="taxonomic scope" value="Bacteria"/>
</dbReference>
<dbReference type="HOGENOM" id="CLU_1559784_0_0_0"/>
<dbReference type="InParanoid" id="O66927"/>
<dbReference type="OrthoDB" id="15006at2"/>
<dbReference type="Proteomes" id="UP000000798">
    <property type="component" value="Chromosome"/>
</dbReference>
<dbReference type="Gene3D" id="1.25.40.10">
    <property type="entry name" value="Tetratricopeptide repeat domain"/>
    <property type="match status" value="1"/>
</dbReference>
<dbReference type="InterPro" id="IPR011990">
    <property type="entry name" value="TPR-like_helical_dom_sf"/>
</dbReference>
<dbReference type="SUPFAM" id="SSF48452">
    <property type="entry name" value="TPR-like"/>
    <property type="match status" value="1"/>
</dbReference>
<feature type="signal peptide" evidence="1">
    <location>
        <begin position="1"/>
        <end position="20"/>
    </location>
</feature>
<feature type="chain" id="PRO_0000013618" description="Uncharacterized protein aq_711">
    <location>
        <begin position="21"/>
        <end position="171"/>
    </location>
</feature>
<protein>
    <recommendedName>
        <fullName>Uncharacterized protein aq_711</fullName>
    </recommendedName>
</protein>
<keyword id="KW-1185">Reference proteome</keyword>
<keyword id="KW-0732">Signal</keyword>
<sequence length="171" mass="20428">MRDFYLFLGAVFLLVLGVWAYNAYKEHKINSFKEISYKVYLFEKGKLKKEEILKITKGTPFYPYVLAKFGNFQEIYEDIEEENMKKFYKERLSADFYLNKKYGKALENLKEIKKEDFNYPSAKSLEAFSYEKLGKINKALSLWSAIKEEYPNTYFGNLSQVKIFLLKEKER</sequence>
<reference key="1">
    <citation type="journal article" date="1998" name="Nature">
        <title>The complete genome of the hyperthermophilic bacterium Aquifex aeolicus.</title>
        <authorList>
            <person name="Deckert G."/>
            <person name="Warren P.V."/>
            <person name="Gaasterland T."/>
            <person name="Young W.G."/>
            <person name="Lenox A.L."/>
            <person name="Graham D.E."/>
            <person name="Overbeek R."/>
            <person name="Snead M.A."/>
            <person name="Keller M."/>
            <person name="Aujay M."/>
            <person name="Huber R."/>
            <person name="Feldman R.A."/>
            <person name="Short J.M."/>
            <person name="Olsen G.J."/>
            <person name="Swanson R.V."/>
        </authorList>
    </citation>
    <scope>NUCLEOTIDE SEQUENCE [LARGE SCALE GENOMIC DNA]</scope>
    <source>
        <strain>VF5</strain>
    </source>
</reference>